<protein>
    <recommendedName>
        <fullName evidence="1">Protein E6</fullName>
    </recommendedName>
</protein>
<comment type="function">
    <text evidence="1">Plays a major role in the induction and maintenance of cellular transformation. E6 associates with host UBE3A/E6-AP ubiquitin-protein ligase and modulates its activity. Sequesters tumor suppressor TP53 in the host cytoplasm and modulates its activity by interacting with host EP300 that results in the reduction of TP53 acetylation and activation. In turn, apoptosis induced by DNA damage is inhibited. E6 also protects host keratinocytes from apoptosis by mediating the degradation of host BAK1. May also inhibit host immune response.</text>
</comment>
<comment type="subunit">
    <text evidence="1">Forms homodimers. Interacts with ubiquitin-protein ligase UBE3A/E6-AP; this interaction stimulates UBE3A ubiquitin activity. Interacts with host TP53 and EP300; this interaction inhibits TP53 activity.</text>
</comment>
<comment type="subcellular location">
    <subcellularLocation>
        <location evidence="1">Host cytoplasm</location>
    </subcellularLocation>
    <subcellularLocation>
        <location evidence="1">Host nucleus</location>
    </subcellularLocation>
</comment>
<comment type="miscellaneous">
    <text evidence="1">Belongs to the low risk human alphapapillomavirus family. The cancer-causing human papillomavirus E6 protein has a unique carboxy terminal PDZ domain containing substrate but low risk E6s do not possess this domain.</text>
</comment>
<comment type="similarity">
    <text evidence="2">Belongs to the papillomaviridae E6 protein family.</text>
</comment>
<accession>P50803</accession>
<proteinExistence type="inferred from homology"/>
<dbReference type="EMBL" id="U31784">
    <property type="protein sequence ID" value="AAA79429.1"/>
    <property type="molecule type" value="Genomic_DNA"/>
</dbReference>
<dbReference type="SMR" id="P50803"/>
<dbReference type="Proteomes" id="UP000009115">
    <property type="component" value="Segment"/>
</dbReference>
<dbReference type="GO" id="GO:0030430">
    <property type="term" value="C:host cell cytoplasm"/>
    <property type="evidence" value="ECO:0007669"/>
    <property type="project" value="UniProtKB-SubCell"/>
</dbReference>
<dbReference type="GO" id="GO:0042025">
    <property type="term" value="C:host cell nucleus"/>
    <property type="evidence" value="ECO:0007669"/>
    <property type="project" value="UniProtKB-SubCell"/>
</dbReference>
<dbReference type="GO" id="GO:0003677">
    <property type="term" value="F:DNA binding"/>
    <property type="evidence" value="ECO:0007669"/>
    <property type="project" value="UniProtKB-UniRule"/>
</dbReference>
<dbReference type="GO" id="GO:0008270">
    <property type="term" value="F:zinc ion binding"/>
    <property type="evidence" value="ECO:0007669"/>
    <property type="project" value="UniProtKB-KW"/>
</dbReference>
<dbReference type="GO" id="GO:0006351">
    <property type="term" value="P:DNA-templated transcription"/>
    <property type="evidence" value="ECO:0007669"/>
    <property type="project" value="UniProtKB-UniRule"/>
</dbReference>
<dbReference type="GO" id="GO:0006355">
    <property type="term" value="P:regulation of DNA-templated transcription"/>
    <property type="evidence" value="ECO:0007669"/>
    <property type="project" value="UniProtKB-UniRule"/>
</dbReference>
<dbReference type="GO" id="GO:0052150">
    <property type="term" value="P:symbiont-mediated perturbation of host apoptosis"/>
    <property type="evidence" value="ECO:0007669"/>
    <property type="project" value="UniProtKB-KW"/>
</dbReference>
<dbReference type="GO" id="GO:0039648">
    <property type="term" value="P:symbiont-mediated perturbation of host ubiquitin-like protein modification"/>
    <property type="evidence" value="ECO:0007669"/>
    <property type="project" value="UniProtKB-UniRule"/>
</dbReference>
<dbReference type="GO" id="GO:0052170">
    <property type="term" value="P:symbiont-mediated suppression of host innate immune response"/>
    <property type="evidence" value="ECO:0007669"/>
    <property type="project" value="UniProtKB-KW"/>
</dbReference>
<dbReference type="GO" id="GO:0039502">
    <property type="term" value="P:symbiont-mediated suppression of host type I interferon-mediated signaling pathway"/>
    <property type="evidence" value="ECO:0007669"/>
    <property type="project" value="UniProtKB-UniRule"/>
</dbReference>
<dbReference type="Gene3D" id="3.30.240.40">
    <property type="entry name" value="E6 early regulatory protein"/>
    <property type="match status" value="2"/>
</dbReference>
<dbReference type="HAMAP" id="MF_04006">
    <property type="entry name" value="HPV_E6"/>
    <property type="match status" value="1"/>
</dbReference>
<dbReference type="InterPro" id="IPR001334">
    <property type="entry name" value="E6"/>
</dbReference>
<dbReference type="InterPro" id="IPR038575">
    <property type="entry name" value="E6_sf"/>
</dbReference>
<dbReference type="Pfam" id="PF00518">
    <property type="entry name" value="E6"/>
    <property type="match status" value="1"/>
</dbReference>
<dbReference type="SUPFAM" id="SSF161229">
    <property type="entry name" value="E6 C-terminal domain-like"/>
    <property type="match status" value="2"/>
</dbReference>
<feature type="chain" id="PRO_0000133349" description="Protein E6">
    <location>
        <begin position="1"/>
        <end position="148"/>
    </location>
</feature>
<feature type="zinc finger region" evidence="1">
    <location>
        <begin position="29"/>
        <end position="65"/>
    </location>
</feature>
<feature type="zinc finger region" evidence="1">
    <location>
        <begin position="102"/>
        <end position="138"/>
    </location>
</feature>
<reference key="1">
    <citation type="submission" date="1995-10" db="EMBL/GenBank/DDBJ databases">
        <authorList>
            <person name="Delius H."/>
        </authorList>
    </citation>
    <scope>NUCLEOTIDE SEQUENCE [GENOMIC DNA]</scope>
</reference>
<evidence type="ECO:0000255" key="1">
    <source>
        <dbReference type="HAMAP-Rule" id="MF_04006"/>
    </source>
</evidence>
<evidence type="ECO:0000305" key="2"/>
<organismHost>
    <name type="scientific">Homo sapiens</name>
    <name type="common">Human</name>
    <dbReference type="NCBI Taxonomy" id="9606"/>
</organismHost>
<name>VE6_HPV29</name>
<keyword id="KW-0010">Activator</keyword>
<keyword id="KW-0238">DNA-binding</keyword>
<keyword id="KW-0244">Early protein</keyword>
<keyword id="KW-1035">Host cytoplasm</keyword>
<keyword id="KW-1048">Host nucleus</keyword>
<keyword id="KW-0945">Host-virus interaction</keyword>
<keyword id="KW-1090">Inhibition of host innate immune response by virus</keyword>
<keyword id="KW-0479">Metal-binding</keyword>
<keyword id="KW-1119">Modulation of host cell apoptosis by virus</keyword>
<keyword id="KW-1185">Reference proteome</keyword>
<keyword id="KW-0804">Transcription</keyword>
<keyword id="KW-0805">Transcription regulation</keyword>
<keyword id="KW-0899">Viral immunoevasion</keyword>
<keyword id="KW-0862">Zinc</keyword>
<keyword id="KW-0863">Zinc-finger</keyword>
<sequence>MSRGDGYPKNIFLLCRDSGVPFEDLRLQCVFCTKELTSPELAAFCIRELNVVWKSGAPYGACARCLLFEGIKRRLKYWQYSCFVEGVEAETNESIYTQLIRCYMCHKPLVREEKDKHRNEKRRLHKISGYWRGSCLYCWSRCMGQSPR</sequence>
<gene>
    <name evidence="1" type="primary">E6</name>
</gene>
<organism>
    <name type="scientific">Human papillomavirus 29</name>
    <dbReference type="NCBI Taxonomy" id="37112"/>
    <lineage>
        <taxon>Viruses</taxon>
        <taxon>Monodnaviria</taxon>
        <taxon>Shotokuvirae</taxon>
        <taxon>Cossaviricota</taxon>
        <taxon>Papovaviricetes</taxon>
        <taxon>Zurhausenvirales</taxon>
        <taxon>Papillomaviridae</taxon>
        <taxon>Firstpapillomavirinae</taxon>
        <taxon>Alphapapillomavirus</taxon>
        <taxon>Alphapapillomavirus 2</taxon>
    </lineage>
</organism>